<name>PVK1_DERER</name>
<sequence length="11" mass="1114">GASGLIPVMRN</sequence>
<organism>
    <name type="scientific">Deropeltis erythrocephala</name>
    <name type="common">Black velvet roach</name>
    <dbReference type="NCBI Taxonomy" id="303918"/>
    <lineage>
        <taxon>Eukaryota</taxon>
        <taxon>Metazoa</taxon>
        <taxon>Ecdysozoa</taxon>
        <taxon>Arthropoda</taxon>
        <taxon>Hexapoda</taxon>
        <taxon>Insecta</taxon>
        <taxon>Pterygota</taxon>
        <taxon>Neoptera</taxon>
        <taxon>Polyneoptera</taxon>
        <taxon>Dictyoptera</taxon>
        <taxon>Blattodea</taxon>
        <taxon>Blattoidea</taxon>
        <taxon>Blattidae</taxon>
        <taxon>Blattinae</taxon>
        <taxon>Deropeltis</taxon>
    </lineage>
</organism>
<proteinExistence type="evidence at protein level"/>
<dbReference type="GO" id="GO:0005576">
    <property type="term" value="C:extracellular region"/>
    <property type="evidence" value="ECO:0007669"/>
    <property type="project" value="UniProtKB-SubCell"/>
</dbReference>
<dbReference type="GO" id="GO:0007218">
    <property type="term" value="P:neuropeptide signaling pathway"/>
    <property type="evidence" value="ECO:0007669"/>
    <property type="project" value="UniProtKB-KW"/>
</dbReference>
<feature type="peptide" id="PRO_0000378735" description="Periviscerokinin-1" evidence="2">
    <location>
        <begin position="1"/>
        <end position="11"/>
    </location>
</feature>
<feature type="modified residue" description="Asparagine amide" evidence="2">
    <location>
        <position position="11"/>
    </location>
</feature>
<accession>P85583</accession>
<comment type="function">
    <text evidence="4">Mediates visceral muscle contractile activity (myotropic activity).</text>
</comment>
<comment type="subcellular location">
    <subcellularLocation>
        <location evidence="4">Secreted</location>
    </subcellularLocation>
</comment>
<comment type="similarity">
    <text evidence="1">Belongs to the periviscerokinin family.</text>
</comment>
<protein>
    <recommendedName>
        <fullName evidence="3">Periviscerokinin-1</fullName>
        <shortName evidence="3">DerEr-PVK-1</shortName>
    </recommendedName>
</protein>
<evidence type="ECO:0000255" key="1"/>
<evidence type="ECO:0000269" key="2">
    <source>
    </source>
</evidence>
<evidence type="ECO:0000303" key="3">
    <source>
    </source>
</evidence>
<evidence type="ECO:0000305" key="4"/>
<reference evidence="4" key="1">
    <citation type="journal article" date="2009" name="BMC Evol. Biol.">
        <title>A proteomic approach for studying insect phylogeny: CAPA peptides of ancient insect taxa (Dictyoptera, Blattoptera) as a test case.</title>
        <authorList>
            <person name="Roth S."/>
            <person name="Fromm B."/>
            <person name="Gaede G."/>
            <person name="Predel R."/>
        </authorList>
    </citation>
    <scope>PROTEIN SEQUENCE</scope>
    <scope>AMIDATION AT ASN-11</scope>
    <source>
        <tissue evidence="2">Abdominal perisympathetic organs</tissue>
    </source>
</reference>
<keyword id="KW-0027">Amidation</keyword>
<keyword id="KW-0903">Direct protein sequencing</keyword>
<keyword id="KW-0527">Neuropeptide</keyword>
<keyword id="KW-0964">Secreted</keyword>